<gene>
    <name evidence="1" type="primary">ubiE</name>
    <name type="ordered locus">Caul_5074</name>
</gene>
<organism>
    <name type="scientific">Caulobacter sp. (strain K31)</name>
    <dbReference type="NCBI Taxonomy" id="366602"/>
    <lineage>
        <taxon>Bacteria</taxon>
        <taxon>Pseudomonadati</taxon>
        <taxon>Pseudomonadota</taxon>
        <taxon>Alphaproteobacteria</taxon>
        <taxon>Caulobacterales</taxon>
        <taxon>Caulobacteraceae</taxon>
        <taxon>Caulobacter</taxon>
    </lineage>
</organism>
<sequence length="252" mass="27612">MTKASATFGFKDVDASAKAGLVRGVFDRVAKNYDLMNDVMSGGVHRLWKDAVAARLNPQPGEIIIDCAGGTGDMARRFAKMTRAAQERRGGPDALINIIDYNAEMIGAGIEKGGAPEITWTVGDAQRLPLPDAYADAYVISFGIRNVTDIDAALREARRVLKPGGRFLCLEFSKPVTEALSKAYDAYSFKLIPQFGEWLAKDRDAYQYLVESIRRFPDQKTFAGMMENAGFKRVTITNFTGGVAAMHQGWAL</sequence>
<reference key="1">
    <citation type="submission" date="2008-01" db="EMBL/GenBank/DDBJ databases">
        <title>Complete sequence of chromosome of Caulobacter sp. K31.</title>
        <authorList>
            <consortium name="US DOE Joint Genome Institute"/>
            <person name="Copeland A."/>
            <person name="Lucas S."/>
            <person name="Lapidus A."/>
            <person name="Barry K."/>
            <person name="Glavina del Rio T."/>
            <person name="Dalin E."/>
            <person name="Tice H."/>
            <person name="Pitluck S."/>
            <person name="Bruce D."/>
            <person name="Goodwin L."/>
            <person name="Thompson L.S."/>
            <person name="Brettin T."/>
            <person name="Detter J.C."/>
            <person name="Han C."/>
            <person name="Schmutz J."/>
            <person name="Larimer F."/>
            <person name="Land M."/>
            <person name="Hauser L."/>
            <person name="Kyrpides N."/>
            <person name="Kim E."/>
            <person name="Stephens C."/>
            <person name="Richardson P."/>
        </authorList>
    </citation>
    <scope>NUCLEOTIDE SEQUENCE [LARGE SCALE GENOMIC DNA]</scope>
    <source>
        <strain>K31</strain>
    </source>
</reference>
<comment type="function">
    <text evidence="1">Methyltransferase required for the conversion of demethylmenaquinol (DMKH2) to menaquinol (MKH2) and the conversion of 2-polyprenyl-6-methoxy-1,4-benzoquinol (DDMQH2) to 2-polyprenyl-3-methyl-6-methoxy-1,4-benzoquinol (DMQH2).</text>
</comment>
<comment type="catalytic activity">
    <reaction evidence="1">
        <text>a 2-demethylmenaquinol + S-adenosyl-L-methionine = a menaquinol + S-adenosyl-L-homocysteine + H(+)</text>
        <dbReference type="Rhea" id="RHEA:42640"/>
        <dbReference type="Rhea" id="RHEA-COMP:9539"/>
        <dbReference type="Rhea" id="RHEA-COMP:9563"/>
        <dbReference type="ChEBI" id="CHEBI:15378"/>
        <dbReference type="ChEBI" id="CHEBI:18151"/>
        <dbReference type="ChEBI" id="CHEBI:55437"/>
        <dbReference type="ChEBI" id="CHEBI:57856"/>
        <dbReference type="ChEBI" id="CHEBI:59789"/>
        <dbReference type="EC" id="2.1.1.163"/>
    </reaction>
</comment>
<comment type="catalytic activity">
    <reaction evidence="1">
        <text>a 2-methoxy-6-(all-trans-polyprenyl)benzene-1,4-diol + S-adenosyl-L-methionine = a 5-methoxy-2-methyl-3-(all-trans-polyprenyl)benzene-1,4-diol + S-adenosyl-L-homocysteine + H(+)</text>
        <dbReference type="Rhea" id="RHEA:28286"/>
        <dbReference type="Rhea" id="RHEA-COMP:10858"/>
        <dbReference type="Rhea" id="RHEA-COMP:10859"/>
        <dbReference type="ChEBI" id="CHEBI:15378"/>
        <dbReference type="ChEBI" id="CHEBI:57856"/>
        <dbReference type="ChEBI" id="CHEBI:59789"/>
        <dbReference type="ChEBI" id="CHEBI:84166"/>
        <dbReference type="ChEBI" id="CHEBI:84167"/>
        <dbReference type="EC" id="2.1.1.201"/>
    </reaction>
</comment>
<comment type="pathway">
    <text evidence="1">Quinol/quinone metabolism; menaquinone biosynthesis; menaquinol from 1,4-dihydroxy-2-naphthoate: step 2/2.</text>
</comment>
<comment type="pathway">
    <text evidence="1">Cofactor biosynthesis; ubiquinone biosynthesis.</text>
</comment>
<comment type="similarity">
    <text evidence="1">Belongs to the class I-like SAM-binding methyltransferase superfamily. MenG/UbiE family.</text>
</comment>
<proteinExistence type="inferred from homology"/>
<protein>
    <recommendedName>
        <fullName evidence="1">Ubiquinone/menaquinone biosynthesis C-methyltransferase UbiE</fullName>
        <ecNumber evidence="1">2.1.1.163</ecNumber>
        <ecNumber evidence="1">2.1.1.201</ecNumber>
    </recommendedName>
    <alternativeName>
        <fullName evidence="1">2-methoxy-6-polyprenyl-1,4-benzoquinol methylase</fullName>
    </alternativeName>
    <alternativeName>
        <fullName evidence="1">Demethylmenaquinone methyltransferase</fullName>
    </alternativeName>
</protein>
<feature type="chain" id="PRO_1000088278" description="Ubiquinone/menaquinone biosynthesis C-methyltransferase UbiE">
    <location>
        <begin position="1"/>
        <end position="252"/>
    </location>
</feature>
<feature type="binding site" evidence="1">
    <location>
        <position position="71"/>
    </location>
    <ligand>
        <name>S-adenosyl-L-methionine</name>
        <dbReference type="ChEBI" id="CHEBI:59789"/>
    </ligand>
</feature>
<feature type="binding site" evidence="1">
    <location>
        <position position="100"/>
    </location>
    <ligand>
        <name>S-adenosyl-L-methionine</name>
        <dbReference type="ChEBI" id="CHEBI:59789"/>
    </ligand>
</feature>
<feature type="binding site" evidence="1">
    <location>
        <begin position="124"/>
        <end position="125"/>
    </location>
    <ligand>
        <name>S-adenosyl-L-methionine</name>
        <dbReference type="ChEBI" id="CHEBI:59789"/>
    </ligand>
</feature>
<feature type="binding site" evidence="1">
    <location>
        <position position="141"/>
    </location>
    <ligand>
        <name>S-adenosyl-L-methionine</name>
        <dbReference type="ChEBI" id="CHEBI:59789"/>
    </ligand>
</feature>
<accession>B0T7D0</accession>
<dbReference type="EC" id="2.1.1.163" evidence="1"/>
<dbReference type="EC" id="2.1.1.201" evidence="1"/>
<dbReference type="EMBL" id="CP000927">
    <property type="protein sequence ID" value="ABZ74194.1"/>
    <property type="molecule type" value="Genomic_DNA"/>
</dbReference>
<dbReference type="SMR" id="B0T7D0"/>
<dbReference type="STRING" id="366602.Caul_5074"/>
<dbReference type="KEGG" id="cak:Caul_5074"/>
<dbReference type="eggNOG" id="COG2226">
    <property type="taxonomic scope" value="Bacteria"/>
</dbReference>
<dbReference type="HOGENOM" id="CLU_037990_0_0_5"/>
<dbReference type="OrthoDB" id="9808140at2"/>
<dbReference type="UniPathway" id="UPA00079">
    <property type="reaction ID" value="UER00169"/>
</dbReference>
<dbReference type="UniPathway" id="UPA00232"/>
<dbReference type="GO" id="GO:0008425">
    <property type="term" value="F:2-methoxy-6-polyprenyl-1,4-benzoquinol methyltransferase activity"/>
    <property type="evidence" value="ECO:0007669"/>
    <property type="project" value="UniProtKB-UniRule"/>
</dbReference>
<dbReference type="GO" id="GO:0043770">
    <property type="term" value="F:demethylmenaquinone methyltransferase activity"/>
    <property type="evidence" value="ECO:0007669"/>
    <property type="project" value="UniProtKB-UniRule"/>
</dbReference>
<dbReference type="GO" id="GO:0009060">
    <property type="term" value="P:aerobic respiration"/>
    <property type="evidence" value="ECO:0007669"/>
    <property type="project" value="UniProtKB-UniRule"/>
</dbReference>
<dbReference type="GO" id="GO:0009234">
    <property type="term" value="P:menaquinone biosynthetic process"/>
    <property type="evidence" value="ECO:0007669"/>
    <property type="project" value="UniProtKB-UniRule"/>
</dbReference>
<dbReference type="GO" id="GO:0032259">
    <property type="term" value="P:methylation"/>
    <property type="evidence" value="ECO:0007669"/>
    <property type="project" value="UniProtKB-KW"/>
</dbReference>
<dbReference type="CDD" id="cd02440">
    <property type="entry name" value="AdoMet_MTases"/>
    <property type="match status" value="1"/>
</dbReference>
<dbReference type="Gene3D" id="3.40.50.150">
    <property type="entry name" value="Vaccinia Virus protein VP39"/>
    <property type="match status" value="1"/>
</dbReference>
<dbReference type="HAMAP" id="MF_01813">
    <property type="entry name" value="MenG_UbiE_methyltr"/>
    <property type="match status" value="1"/>
</dbReference>
<dbReference type="InterPro" id="IPR029063">
    <property type="entry name" value="SAM-dependent_MTases_sf"/>
</dbReference>
<dbReference type="InterPro" id="IPR004033">
    <property type="entry name" value="UbiE/COQ5_MeTrFase"/>
</dbReference>
<dbReference type="InterPro" id="IPR023576">
    <property type="entry name" value="UbiE/COQ5_MeTrFase_CS"/>
</dbReference>
<dbReference type="NCBIfam" id="TIGR01934">
    <property type="entry name" value="MenG_MenH_UbiE"/>
    <property type="match status" value="1"/>
</dbReference>
<dbReference type="PANTHER" id="PTHR43591:SF24">
    <property type="entry name" value="2-METHOXY-6-POLYPRENYL-1,4-BENZOQUINOL METHYLASE, MITOCHONDRIAL"/>
    <property type="match status" value="1"/>
</dbReference>
<dbReference type="PANTHER" id="PTHR43591">
    <property type="entry name" value="METHYLTRANSFERASE"/>
    <property type="match status" value="1"/>
</dbReference>
<dbReference type="Pfam" id="PF01209">
    <property type="entry name" value="Ubie_methyltran"/>
    <property type="match status" value="1"/>
</dbReference>
<dbReference type="SUPFAM" id="SSF53335">
    <property type="entry name" value="S-adenosyl-L-methionine-dependent methyltransferases"/>
    <property type="match status" value="1"/>
</dbReference>
<dbReference type="PROSITE" id="PS51608">
    <property type="entry name" value="SAM_MT_UBIE"/>
    <property type="match status" value="1"/>
</dbReference>
<dbReference type="PROSITE" id="PS01183">
    <property type="entry name" value="UBIE_1"/>
    <property type="match status" value="1"/>
</dbReference>
<dbReference type="PROSITE" id="PS01184">
    <property type="entry name" value="UBIE_2"/>
    <property type="match status" value="1"/>
</dbReference>
<name>UBIE_CAUSK</name>
<keyword id="KW-0474">Menaquinone biosynthesis</keyword>
<keyword id="KW-0489">Methyltransferase</keyword>
<keyword id="KW-0949">S-adenosyl-L-methionine</keyword>
<keyword id="KW-0808">Transferase</keyword>
<keyword id="KW-0831">Ubiquinone biosynthesis</keyword>
<evidence type="ECO:0000255" key="1">
    <source>
        <dbReference type="HAMAP-Rule" id="MF_01813"/>
    </source>
</evidence>